<organism>
    <name type="scientific">Oenococcus oeni (strain ATCC BAA-331 / PSU-1)</name>
    <dbReference type="NCBI Taxonomy" id="203123"/>
    <lineage>
        <taxon>Bacteria</taxon>
        <taxon>Bacillati</taxon>
        <taxon>Bacillota</taxon>
        <taxon>Bacilli</taxon>
        <taxon>Lactobacillales</taxon>
        <taxon>Lactobacillaceae</taxon>
        <taxon>Oenococcus</taxon>
    </lineage>
</organism>
<sequence>MTKLTVKDLDLKGKKVLMRVDFNVPIKDGVIGNDNRVVAALPTIKYVLEQGGKAILFSHLGRIKKAEDKPGLSLAPVAKHLSDLLNQEVVFPGKTEGKELEDAIDKLKDGQVLMVENTRYEDVDANGEYVKRESGNDPELGKYWADLGDDLFVNDAFGTAHRSHASNVGIASNVSKTAAGFLMEKEIKYLDEAVNNPKRPFVAVLGGAKVSDKIEVIKNLLSKADKVIVGGGMSYTFSNAKGVKIGNSLFEADKVSLAKEIMKEAGDKLVLPEDSVAAESFANDVPTKVFENGIPDGWMGLDIGPKTIEKFKNTLKGAKTVVWNGPMGVFEMSNFANGTLELGKFIGSLTSEGAATIVGGGDSTAAVSQLGIADQFTHISTGGGASLEYLEGKTLPGIAAISDK</sequence>
<evidence type="ECO:0000255" key="1">
    <source>
        <dbReference type="HAMAP-Rule" id="MF_00145"/>
    </source>
</evidence>
<keyword id="KW-0067">ATP-binding</keyword>
<keyword id="KW-0963">Cytoplasm</keyword>
<keyword id="KW-0324">Glycolysis</keyword>
<keyword id="KW-0418">Kinase</keyword>
<keyword id="KW-0547">Nucleotide-binding</keyword>
<keyword id="KW-1185">Reference proteome</keyword>
<keyword id="KW-0808">Transferase</keyword>
<gene>
    <name evidence="1" type="primary">pgk</name>
    <name type="ordered locus">OEOE_0638</name>
</gene>
<proteinExistence type="inferred from homology"/>
<accession>Q04G42</accession>
<dbReference type="EC" id="2.7.2.3" evidence="1"/>
<dbReference type="EMBL" id="CP000411">
    <property type="protein sequence ID" value="ABJ56580.1"/>
    <property type="molecule type" value="Genomic_DNA"/>
</dbReference>
<dbReference type="RefSeq" id="WP_002818499.1">
    <property type="nucleotide sequence ID" value="NC_008528.1"/>
</dbReference>
<dbReference type="SMR" id="Q04G42"/>
<dbReference type="STRING" id="203123.OEOE_0638"/>
<dbReference type="KEGG" id="ooe:OEOE_0638"/>
<dbReference type="eggNOG" id="COG0126">
    <property type="taxonomic scope" value="Bacteria"/>
</dbReference>
<dbReference type="HOGENOM" id="CLU_025427_0_2_9"/>
<dbReference type="UniPathway" id="UPA00109">
    <property type="reaction ID" value="UER00185"/>
</dbReference>
<dbReference type="Proteomes" id="UP000000774">
    <property type="component" value="Chromosome"/>
</dbReference>
<dbReference type="GO" id="GO:0005829">
    <property type="term" value="C:cytosol"/>
    <property type="evidence" value="ECO:0007669"/>
    <property type="project" value="TreeGrafter"/>
</dbReference>
<dbReference type="GO" id="GO:0043531">
    <property type="term" value="F:ADP binding"/>
    <property type="evidence" value="ECO:0007669"/>
    <property type="project" value="TreeGrafter"/>
</dbReference>
<dbReference type="GO" id="GO:0005524">
    <property type="term" value="F:ATP binding"/>
    <property type="evidence" value="ECO:0007669"/>
    <property type="project" value="UniProtKB-KW"/>
</dbReference>
<dbReference type="GO" id="GO:0004618">
    <property type="term" value="F:phosphoglycerate kinase activity"/>
    <property type="evidence" value="ECO:0007669"/>
    <property type="project" value="UniProtKB-UniRule"/>
</dbReference>
<dbReference type="GO" id="GO:0006094">
    <property type="term" value="P:gluconeogenesis"/>
    <property type="evidence" value="ECO:0007669"/>
    <property type="project" value="TreeGrafter"/>
</dbReference>
<dbReference type="GO" id="GO:0006096">
    <property type="term" value="P:glycolytic process"/>
    <property type="evidence" value="ECO:0007669"/>
    <property type="project" value="UniProtKB-UniRule"/>
</dbReference>
<dbReference type="CDD" id="cd00318">
    <property type="entry name" value="Phosphoglycerate_kinase"/>
    <property type="match status" value="1"/>
</dbReference>
<dbReference type="FunFam" id="3.40.50.1260:FF:000007">
    <property type="entry name" value="Phosphoglycerate kinase"/>
    <property type="match status" value="1"/>
</dbReference>
<dbReference type="FunFam" id="3.40.50.1260:FF:000008">
    <property type="entry name" value="Phosphoglycerate kinase"/>
    <property type="match status" value="1"/>
</dbReference>
<dbReference type="Gene3D" id="3.40.50.1260">
    <property type="entry name" value="Phosphoglycerate kinase, N-terminal domain"/>
    <property type="match status" value="2"/>
</dbReference>
<dbReference type="HAMAP" id="MF_00145">
    <property type="entry name" value="Phosphoglyc_kinase"/>
    <property type="match status" value="1"/>
</dbReference>
<dbReference type="InterPro" id="IPR001576">
    <property type="entry name" value="Phosphoglycerate_kinase"/>
</dbReference>
<dbReference type="InterPro" id="IPR015911">
    <property type="entry name" value="Phosphoglycerate_kinase_CS"/>
</dbReference>
<dbReference type="InterPro" id="IPR015824">
    <property type="entry name" value="Phosphoglycerate_kinase_N"/>
</dbReference>
<dbReference type="InterPro" id="IPR036043">
    <property type="entry name" value="Phosphoglycerate_kinase_sf"/>
</dbReference>
<dbReference type="PANTHER" id="PTHR11406">
    <property type="entry name" value="PHOSPHOGLYCERATE KINASE"/>
    <property type="match status" value="1"/>
</dbReference>
<dbReference type="PANTHER" id="PTHR11406:SF23">
    <property type="entry name" value="PHOSPHOGLYCERATE KINASE 1, CHLOROPLASTIC-RELATED"/>
    <property type="match status" value="1"/>
</dbReference>
<dbReference type="Pfam" id="PF00162">
    <property type="entry name" value="PGK"/>
    <property type="match status" value="1"/>
</dbReference>
<dbReference type="PIRSF" id="PIRSF000724">
    <property type="entry name" value="Pgk"/>
    <property type="match status" value="1"/>
</dbReference>
<dbReference type="PRINTS" id="PR00477">
    <property type="entry name" value="PHGLYCKINASE"/>
</dbReference>
<dbReference type="SUPFAM" id="SSF53748">
    <property type="entry name" value="Phosphoglycerate kinase"/>
    <property type="match status" value="1"/>
</dbReference>
<dbReference type="PROSITE" id="PS00111">
    <property type="entry name" value="PGLYCERATE_KINASE"/>
    <property type="match status" value="1"/>
</dbReference>
<reference key="1">
    <citation type="journal article" date="2006" name="Proc. Natl. Acad. Sci. U.S.A.">
        <title>Comparative genomics of the lactic acid bacteria.</title>
        <authorList>
            <person name="Makarova K.S."/>
            <person name="Slesarev A."/>
            <person name="Wolf Y.I."/>
            <person name="Sorokin A."/>
            <person name="Mirkin B."/>
            <person name="Koonin E.V."/>
            <person name="Pavlov A."/>
            <person name="Pavlova N."/>
            <person name="Karamychev V."/>
            <person name="Polouchine N."/>
            <person name="Shakhova V."/>
            <person name="Grigoriev I."/>
            <person name="Lou Y."/>
            <person name="Rohksar D."/>
            <person name="Lucas S."/>
            <person name="Huang K."/>
            <person name="Goodstein D.M."/>
            <person name="Hawkins T."/>
            <person name="Plengvidhya V."/>
            <person name="Welker D."/>
            <person name="Hughes J."/>
            <person name="Goh Y."/>
            <person name="Benson A."/>
            <person name="Baldwin K."/>
            <person name="Lee J.-H."/>
            <person name="Diaz-Muniz I."/>
            <person name="Dosti B."/>
            <person name="Smeianov V."/>
            <person name="Wechter W."/>
            <person name="Barabote R."/>
            <person name="Lorca G."/>
            <person name="Altermann E."/>
            <person name="Barrangou R."/>
            <person name="Ganesan B."/>
            <person name="Xie Y."/>
            <person name="Rawsthorne H."/>
            <person name="Tamir D."/>
            <person name="Parker C."/>
            <person name="Breidt F."/>
            <person name="Broadbent J.R."/>
            <person name="Hutkins R."/>
            <person name="O'Sullivan D."/>
            <person name="Steele J."/>
            <person name="Unlu G."/>
            <person name="Saier M.H. Jr."/>
            <person name="Klaenhammer T."/>
            <person name="Richardson P."/>
            <person name="Kozyavkin S."/>
            <person name="Weimer B.C."/>
            <person name="Mills D.A."/>
        </authorList>
    </citation>
    <scope>NUCLEOTIDE SEQUENCE [LARGE SCALE GENOMIC DNA]</scope>
    <source>
        <strain>ATCC BAA-331 / PSU-1</strain>
    </source>
</reference>
<name>PGK_OENOB</name>
<protein>
    <recommendedName>
        <fullName evidence="1">Phosphoglycerate kinase</fullName>
        <ecNumber evidence="1">2.7.2.3</ecNumber>
    </recommendedName>
</protein>
<comment type="catalytic activity">
    <reaction evidence="1">
        <text>(2R)-3-phosphoglycerate + ATP = (2R)-3-phospho-glyceroyl phosphate + ADP</text>
        <dbReference type="Rhea" id="RHEA:14801"/>
        <dbReference type="ChEBI" id="CHEBI:30616"/>
        <dbReference type="ChEBI" id="CHEBI:57604"/>
        <dbReference type="ChEBI" id="CHEBI:58272"/>
        <dbReference type="ChEBI" id="CHEBI:456216"/>
        <dbReference type="EC" id="2.7.2.3"/>
    </reaction>
</comment>
<comment type="pathway">
    <text evidence="1">Carbohydrate degradation; glycolysis; pyruvate from D-glyceraldehyde 3-phosphate: step 2/5.</text>
</comment>
<comment type="subunit">
    <text evidence="1">Monomer.</text>
</comment>
<comment type="subcellular location">
    <subcellularLocation>
        <location evidence="1">Cytoplasm</location>
    </subcellularLocation>
</comment>
<comment type="similarity">
    <text evidence="1">Belongs to the phosphoglycerate kinase family.</text>
</comment>
<feature type="chain" id="PRO_1000009640" description="Phosphoglycerate kinase">
    <location>
        <begin position="1"/>
        <end position="404"/>
    </location>
</feature>
<feature type="binding site" evidence="1">
    <location>
        <begin position="21"/>
        <end position="23"/>
    </location>
    <ligand>
        <name>substrate</name>
    </ligand>
</feature>
<feature type="binding site" evidence="1">
    <location>
        <position position="36"/>
    </location>
    <ligand>
        <name>substrate</name>
    </ligand>
</feature>
<feature type="binding site" evidence="1">
    <location>
        <begin position="59"/>
        <end position="62"/>
    </location>
    <ligand>
        <name>substrate</name>
    </ligand>
</feature>
<feature type="binding site" evidence="1">
    <location>
        <position position="119"/>
    </location>
    <ligand>
        <name>substrate</name>
    </ligand>
</feature>
<feature type="binding site" evidence="1">
    <location>
        <position position="162"/>
    </location>
    <ligand>
        <name>substrate</name>
    </ligand>
</feature>
<feature type="binding site" evidence="1">
    <location>
        <position position="213"/>
    </location>
    <ligand>
        <name>ATP</name>
        <dbReference type="ChEBI" id="CHEBI:30616"/>
    </ligand>
</feature>
<feature type="binding site" evidence="1">
    <location>
        <position position="300"/>
    </location>
    <ligand>
        <name>ATP</name>
        <dbReference type="ChEBI" id="CHEBI:30616"/>
    </ligand>
</feature>
<feature type="binding site" evidence="1">
    <location>
        <position position="331"/>
    </location>
    <ligand>
        <name>ATP</name>
        <dbReference type="ChEBI" id="CHEBI:30616"/>
    </ligand>
</feature>
<feature type="binding site" evidence="1">
    <location>
        <begin position="360"/>
        <end position="363"/>
    </location>
    <ligand>
        <name>ATP</name>
        <dbReference type="ChEBI" id="CHEBI:30616"/>
    </ligand>
</feature>